<organism>
    <name type="scientific">Haloquadratum walsbyi (strain DSM 16790 / HBSQ001)</name>
    <dbReference type="NCBI Taxonomy" id="362976"/>
    <lineage>
        <taxon>Archaea</taxon>
        <taxon>Methanobacteriati</taxon>
        <taxon>Methanobacteriota</taxon>
        <taxon>Stenosarchaea group</taxon>
        <taxon>Halobacteria</taxon>
        <taxon>Halobacteriales</taxon>
        <taxon>Haloferacaceae</taxon>
        <taxon>Haloquadratum</taxon>
    </lineage>
</organism>
<comment type="function">
    <text evidence="1">Transcription factor that plays a role in the activation of archaeal genes transcribed by RNA polymerase. Facilitates transcription initiation by enhancing TATA-box recognition by TATA-box-binding protein (Tbp), and transcription factor B (Tfb) and RNA polymerase recruitment. Not absolutely required for transcription in vitro, but particularly important in cases where Tbp or Tfb function is not optimal. It dynamically alters the nucleic acid-binding properties of RNA polymerases by stabilizing the initiation complex and destabilizing elongation complexes. Seems to translocate with the RNA polymerase following initiation and acts by binding to the non template strand of the transcription bubble in elongation complexes.</text>
</comment>
<comment type="subunit">
    <text evidence="1">Monomer. Interaction with RNA polymerase subunits RpoF and RpoE is necessary for Tfe stimulatory transcription activity. Able to interact with Tbp and RNA polymerase in the absence of DNA promoter. Interacts both with the preinitiation and elongation complexes.</text>
</comment>
<comment type="domain">
    <text evidence="1">The winged helix domain is involved in binding to DNA in the preinitiation complex.</text>
</comment>
<comment type="similarity">
    <text evidence="1">Belongs to the TFE family.</text>
</comment>
<dbReference type="EMBL" id="AM180088">
    <property type="protein sequence ID" value="CAJ52604.1"/>
    <property type="molecule type" value="Genomic_DNA"/>
</dbReference>
<dbReference type="RefSeq" id="WP_011571723.1">
    <property type="nucleotide sequence ID" value="NC_008212.1"/>
</dbReference>
<dbReference type="SMR" id="Q18HD8"/>
<dbReference type="STRING" id="362976.HQ_2491A"/>
<dbReference type="GeneID" id="4194760"/>
<dbReference type="KEGG" id="hwa:HQ_2491A"/>
<dbReference type="eggNOG" id="arCOG04270">
    <property type="taxonomic scope" value="Archaea"/>
</dbReference>
<dbReference type="HOGENOM" id="CLU_100097_0_0_2"/>
<dbReference type="Proteomes" id="UP000001975">
    <property type="component" value="Chromosome"/>
</dbReference>
<dbReference type="GO" id="GO:0003677">
    <property type="term" value="F:DNA binding"/>
    <property type="evidence" value="ECO:0007669"/>
    <property type="project" value="UniProtKB-KW"/>
</dbReference>
<dbReference type="GO" id="GO:0006355">
    <property type="term" value="P:regulation of DNA-templated transcription"/>
    <property type="evidence" value="ECO:0007669"/>
    <property type="project" value="InterPro"/>
</dbReference>
<dbReference type="GO" id="GO:0006367">
    <property type="term" value="P:transcription initiation at RNA polymerase II promoter"/>
    <property type="evidence" value="ECO:0007669"/>
    <property type="project" value="InterPro"/>
</dbReference>
<dbReference type="FunFam" id="1.10.10.10:FF:000264">
    <property type="entry name" value="Transcription factor E"/>
    <property type="match status" value="1"/>
</dbReference>
<dbReference type="Gene3D" id="1.10.10.10">
    <property type="entry name" value="Winged helix-like DNA-binding domain superfamily/Winged helix DNA-binding domain"/>
    <property type="match status" value="1"/>
</dbReference>
<dbReference type="HAMAP" id="MF_01909">
    <property type="entry name" value="TFE_arch"/>
    <property type="match status" value="1"/>
</dbReference>
<dbReference type="InterPro" id="IPR016481">
    <property type="entry name" value="TF_E_archaea"/>
</dbReference>
<dbReference type="InterPro" id="IPR039997">
    <property type="entry name" value="TFE"/>
</dbReference>
<dbReference type="InterPro" id="IPR017919">
    <property type="entry name" value="TFIIE/TFIIEa_HTH"/>
</dbReference>
<dbReference type="InterPro" id="IPR002853">
    <property type="entry name" value="TFIIE_asu"/>
</dbReference>
<dbReference type="InterPro" id="IPR024550">
    <property type="entry name" value="TFIIEa/SarR/Rpc3_HTH_dom"/>
</dbReference>
<dbReference type="InterPro" id="IPR036388">
    <property type="entry name" value="WH-like_DNA-bd_sf"/>
</dbReference>
<dbReference type="InterPro" id="IPR036390">
    <property type="entry name" value="WH_DNA-bd_sf"/>
</dbReference>
<dbReference type="PANTHER" id="PTHR13097:SF7">
    <property type="entry name" value="GENERAL TRANSCRIPTION FACTOR IIE SUBUNIT 1"/>
    <property type="match status" value="1"/>
</dbReference>
<dbReference type="PANTHER" id="PTHR13097">
    <property type="entry name" value="TRANSCRIPTION INITIATION FACTOR IIE, ALPHA SUBUNIT"/>
    <property type="match status" value="1"/>
</dbReference>
<dbReference type="Pfam" id="PF02002">
    <property type="entry name" value="TFIIE_alpha"/>
    <property type="match status" value="1"/>
</dbReference>
<dbReference type="PIRSF" id="PIRSF006373">
    <property type="entry name" value="TF_E_archaea"/>
    <property type="match status" value="1"/>
</dbReference>
<dbReference type="SMART" id="SM00531">
    <property type="entry name" value="TFIIE"/>
    <property type="match status" value="1"/>
</dbReference>
<dbReference type="SUPFAM" id="SSF46785">
    <property type="entry name" value="Winged helix' DNA-binding domain"/>
    <property type="match status" value="1"/>
</dbReference>
<dbReference type="PROSITE" id="PS51344">
    <property type="entry name" value="HTH_TFE_IIE"/>
    <property type="match status" value="1"/>
</dbReference>
<protein>
    <recommendedName>
        <fullName evidence="1">Transcription factor E</fullName>
        <shortName evidence="1">TFE</shortName>
    </recommendedName>
    <alternativeName>
        <fullName evidence="1">TFIIE subunit alpha homolog</fullName>
    </alternativeName>
    <alternativeName>
        <fullName evidence="1">Transcription initiation factor TFIIE</fullName>
    </alternativeName>
</protein>
<evidence type="ECO:0000255" key="1">
    <source>
        <dbReference type="HAMAP-Rule" id="MF_01909"/>
    </source>
</evidence>
<name>TFE_HALWD</name>
<sequence length="176" mass="20365">MAFDELLNDPVIQKYLHELVGPTGMPVAAAPPDGEVTDEELAEELGLELNDVRRALFILYENDLATYRRVRDEDSGWLTYLWTFHYENIPENLQSEMYRLLDALEERLEYERSHEFYLSEPAGIRFEFSEAMELGFQCPETGAPLEPIENQEMINAMERRIDSLQSELNVGVTQTV</sequence>
<accession>Q18HD8</accession>
<gene>
    <name evidence="1" type="primary">tfe</name>
    <name type="ordered locus">HQ_2491A</name>
</gene>
<keyword id="KW-0238">DNA-binding</keyword>
<keyword id="KW-1185">Reference proteome</keyword>
<keyword id="KW-0804">Transcription</keyword>
<keyword id="KW-0805">Transcription regulation</keyword>
<reference key="1">
    <citation type="journal article" date="2006" name="BMC Genomics">
        <title>The genome of the square archaeon Haloquadratum walsbyi: life at the limits of water activity.</title>
        <authorList>
            <person name="Bolhuis H."/>
            <person name="Palm P."/>
            <person name="Wende A."/>
            <person name="Falb M."/>
            <person name="Rampp M."/>
            <person name="Rodriguez-Valera F."/>
            <person name="Pfeiffer F."/>
            <person name="Oesterhelt D."/>
        </authorList>
    </citation>
    <scope>NUCLEOTIDE SEQUENCE [LARGE SCALE GENOMIC DNA]</scope>
    <source>
        <strain>DSM 16790 / HBSQ001</strain>
    </source>
</reference>
<proteinExistence type="inferred from homology"/>
<feature type="chain" id="PRO_0000326592" description="Transcription factor E">
    <location>
        <begin position="1"/>
        <end position="176"/>
    </location>
</feature>
<feature type="domain" description="HTH TFE/IIEalpha-type" evidence="1">
    <location>
        <begin position="8"/>
        <end position="90"/>
    </location>
</feature>